<accession>A8G3L1</accession>
<sequence length="318" mass="35142">MTNFKLKIASRRSKLAMVQTLWVKDQLERNIPNLDVSIEAMATQGDKILDVALAKIGDKGLFTKELEAQMLVGHADIAVHSLKDLPTNLPNGLKLGCITKREDPADALVVSKKNDYYKLETLPEGSIVGTSSLRRLAQLRNKYPHLVFKDIRGNVITRIEKLDAGEFDCIILAAAGLKRLGFESRIHQIIPSEISLHAVGQGALGIECKSDDKKVLEIINVLEDKPTSQRCLAERAFLRELEGGCQVPIGVNSNIDNGQLYLTGMVASLDGKKLIKDQVIGNINNPELVGIELAKRLKLQGADKILSEIFEEFRENKN</sequence>
<comment type="function">
    <text evidence="1">Tetrapolymerization of the monopyrrole PBG into the hydroxymethylbilane pre-uroporphyrinogen in several discrete steps.</text>
</comment>
<comment type="catalytic activity">
    <reaction evidence="1">
        <text>4 porphobilinogen + H2O = hydroxymethylbilane + 4 NH4(+)</text>
        <dbReference type="Rhea" id="RHEA:13185"/>
        <dbReference type="ChEBI" id="CHEBI:15377"/>
        <dbReference type="ChEBI" id="CHEBI:28938"/>
        <dbReference type="ChEBI" id="CHEBI:57845"/>
        <dbReference type="ChEBI" id="CHEBI:58126"/>
        <dbReference type="EC" id="2.5.1.61"/>
    </reaction>
</comment>
<comment type="cofactor">
    <cofactor evidence="1">
        <name>dipyrromethane</name>
        <dbReference type="ChEBI" id="CHEBI:60342"/>
    </cofactor>
    <text evidence="1">Binds 1 dipyrromethane group covalently.</text>
</comment>
<comment type="pathway">
    <text evidence="1">Porphyrin-containing compound metabolism; protoporphyrin-IX biosynthesis; coproporphyrinogen-III from 5-aminolevulinate: step 2/4.</text>
</comment>
<comment type="pathway">
    <text evidence="1">Porphyrin-containing compound metabolism; chlorophyll biosynthesis.</text>
</comment>
<comment type="subunit">
    <text evidence="1">Monomer.</text>
</comment>
<comment type="miscellaneous">
    <text evidence="1">The porphobilinogen subunits are added to the dipyrromethane group.</text>
</comment>
<comment type="similarity">
    <text evidence="1">Belongs to the HMBS family.</text>
</comment>
<name>HEM3_PROM2</name>
<dbReference type="EC" id="2.5.1.61" evidence="1"/>
<dbReference type="EMBL" id="CP000825">
    <property type="protein sequence ID" value="ABV50192.1"/>
    <property type="molecule type" value="Genomic_DNA"/>
</dbReference>
<dbReference type="RefSeq" id="WP_012007319.1">
    <property type="nucleotide sequence ID" value="NC_009840.1"/>
</dbReference>
<dbReference type="SMR" id="A8G3L1"/>
<dbReference type="STRING" id="93060.P9215_05771"/>
<dbReference type="KEGG" id="pmh:P9215_05771"/>
<dbReference type="eggNOG" id="COG0181">
    <property type="taxonomic scope" value="Bacteria"/>
</dbReference>
<dbReference type="HOGENOM" id="CLU_019704_0_2_3"/>
<dbReference type="OrthoDB" id="9810298at2"/>
<dbReference type="UniPathway" id="UPA00251">
    <property type="reaction ID" value="UER00319"/>
</dbReference>
<dbReference type="UniPathway" id="UPA00668"/>
<dbReference type="Proteomes" id="UP000002014">
    <property type="component" value="Chromosome"/>
</dbReference>
<dbReference type="GO" id="GO:0005737">
    <property type="term" value="C:cytoplasm"/>
    <property type="evidence" value="ECO:0007669"/>
    <property type="project" value="TreeGrafter"/>
</dbReference>
<dbReference type="GO" id="GO:0004418">
    <property type="term" value="F:hydroxymethylbilane synthase activity"/>
    <property type="evidence" value="ECO:0007669"/>
    <property type="project" value="UniProtKB-UniRule"/>
</dbReference>
<dbReference type="GO" id="GO:0015995">
    <property type="term" value="P:chlorophyll biosynthetic process"/>
    <property type="evidence" value="ECO:0007669"/>
    <property type="project" value="UniProtKB-UniRule"/>
</dbReference>
<dbReference type="GO" id="GO:0006782">
    <property type="term" value="P:protoporphyrinogen IX biosynthetic process"/>
    <property type="evidence" value="ECO:0007669"/>
    <property type="project" value="UniProtKB-UniRule"/>
</dbReference>
<dbReference type="CDD" id="cd13645">
    <property type="entry name" value="PBP2_HuPBGD_like"/>
    <property type="match status" value="1"/>
</dbReference>
<dbReference type="FunFam" id="3.30.160.40:FF:000002">
    <property type="entry name" value="Porphobilinogen deaminase"/>
    <property type="match status" value="1"/>
</dbReference>
<dbReference type="FunFam" id="3.40.190.10:FF:000004">
    <property type="entry name" value="Porphobilinogen deaminase"/>
    <property type="match status" value="1"/>
</dbReference>
<dbReference type="FunFam" id="3.40.190.10:FF:000005">
    <property type="entry name" value="Porphobilinogen deaminase"/>
    <property type="match status" value="1"/>
</dbReference>
<dbReference type="Gene3D" id="3.40.190.10">
    <property type="entry name" value="Periplasmic binding protein-like II"/>
    <property type="match status" value="2"/>
</dbReference>
<dbReference type="Gene3D" id="3.30.160.40">
    <property type="entry name" value="Porphobilinogen deaminase, C-terminal domain"/>
    <property type="match status" value="1"/>
</dbReference>
<dbReference type="HAMAP" id="MF_00260">
    <property type="entry name" value="Porphobil_deam"/>
    <property type="match status" value="1"/>
</dbReference>
<dbReference type="InterPro" id="IPR000860">
    <property type="entry name" value="HemC"/>
</dbReference>
<dbReference type="InterPro" id="IPR022419">
    <property type="entry name" value="Porphobilin_deaminase_cofac_BS"/>
</dbReference>
<dbReference type="InterPro" id="IPR022417">
    <property type="entry name" value="Porphobilin_deaminase_N"/>
</dbReference>
<dbReference type="InterPro" id="IPR022418">
    <property type="entry name" value="Porphobilinogen_deaminase_C"/>
</dbReference>
<dbReference type="InterPro" id="IPR036803">
    <property type="entry name" value="Porphobilinogen_deaminase_C_sf"/>
</dbReference>
<dbReference type="NCBIfam" id="TIGR00212">
    <property type="entry name" value="hemC"/>
    <property type="match status" value="1"/>
</dbReference>
<dbReference type="PANTHER" id="PTHR11557">
    <property type="entry name" value="PORPHOBILINOGEN DEAMINASE"/>
    <property type="match status" value="1"/>
</dbReference>
<dbReference type="PANTHER" id="PTHR11557:SF0">
    <property type="entry name" value="PORPHOBILINOGEN DEAMINASE"/>
    <property type="match status" value="1"/>
</dbReference>
<dbReference type="Pfam" id="PF01379">
    <property type="entry name" value="Porphobil_deam"/>
    <property type="match status" value="1"/>
</dbReference>
<dbReference type="Pfam" id="PF03900">
    <property type="entry name" value="Porphobil_deamC"/>
    <property type="match status" value="1"/>
</dbReference>
<dbReference type="PIRSF" id="PIRSF001438">
    <property type="entry name" value="4pyrrol_synth_OHMeBilane_synth"/>
    <property type="match status" value="1"/>
</dbReference>
<dbReference type="PRINTS" id="PR00151">
    <property type="entry name" value="PORPHBDMNASE"/>
</dbReference>
<dbReference type="SUPFAM" id="SSF53850">
    <property type="entry name" value="Periplasmic binding protein-like II"/>
    <property type="match status" value="1"/>
</dbReference>
<dbReference type="SUPFAM" id="SSF54782">
    <property type="entry name" value="Porphobilinogen deaminase (hydroxymethylbilane synthase), C-terminal domain"/>
    <property type="match status" value="1"/>
</dbReference>
<dbReference type="PROSITE" id="PS00533">
    <property type="entry name" value="PORPHOBILINOGEN_DEAM"/>
    <property type="match status" value="1"/>
</dbReference>
<proteinExistence type="inferred from homology"/>
<gene>
    <name evidence="1" type="primary">hemC</name>
    <name type="ordered locus">P9215_05771</name>
</gene>
<organism>
    <name type="scientific">Prochlorococcus marinus (strain MIT 9215)</name>
    <dbReference type="NCBI Taxonomy" id="93060"/>
    <lineage>
        <taxon>Bacteria</taxon>
        <taxon>Bacillati</taxon>
        <taxon>Cyanobacteriota</taxon>
        <taxon>Cyanophyceae</taxon>
        <taxon>Synechococcales</taxon>
        <taxon>Prochlorococcaceae</taxon>
        <taxon>Prochlorococcus</taxon>
    </lineage>
</organism>
<feature type="chain" id="PRO_1000059103" description="Porphobilinogen deaminase">
    <location>
        <begin position="1"/>
        <end position="318"/>
    </location>
</feature>
<feature type="modified residue" description="S-(dipyrrolylmethanemethyl)cysteine" evidence="1">
    <location>
        <position position="245"/>
    </location>
</feature>
<keyword id="KW-0149">Chlorophyll biosynthesis</keyword>
<keyword id="KW-0627">Porphyrin biosynthesis</keyword>
<keyword id="KW-0808">Transferase</keyword>
<evidence type="ECO:0000255" key="1">
    <source>
        <dbReference type="HAMAP-Rule" id="MF_00260"/>
    </source>
</evidence>
<protein>
    <recommendedName>
        <fullName evidence="1">Porphobilinogen deaminase</fullName>
        <shortName evidence="1">PBG</shortName>
        <ecNumber evidence="1">2.5.1.61</ecNumber>
    </recommendedName>
    <alternativeName>
        <fullName evidence="1">Hydroxymethylbilane synthase</fullName>
        <shortName evidence="1">HMBS</shortName>
    </alternativeName>
    <alternativeName>
        <fullName evidence="1">Pre-uroporphyrinogen synthase</fullName>
    </alternativeName>
</protein>
<reference key="1">
    <citation type="journal article" date="2007" name="PLoS Genet.">
        <title>Patterns and implications of gene gain and loss in the evolution of Prochlorococcus.</title>
        <authorList>
            <person name="Kettler G.C."/>
            <person name="Martiny A.C."/>
            <person name="Huang K."/>
            <person name="Zucker J."/>
            <person name="Coleman M.L."/>
            <person name="Rodrigue S."/>
            <person name="Chen F."/>
            <person name="Lapidus A."/>
            <person name="Ferriera S."/>
            <person name="Johnson J."/>
            <person name="Steglich C."/>
            <person name="Church G.M."/>
            <person name="Richardson P."/>
            <person name="Chisholm S.W."/>
        </authorList>
    </citation>
    <scope>NUCLEOTIDE SEQUENCE [LARGE SCALE GENOMIC DNA]</scope>
    <source>
        <strain>MIT 9215</strain>
    </source>
</reference>